<dbReference type="EMBL" id="DP000195">
    <property type="protein sequence ID" value="ABJ08871.1"/>
    <property type="molecule type" value="Genomic_DNA"/>
</dbReference>
<dbReference type="RefSeq" id="XP_065795996.1">
    <property type="nucleotide sequence ID" value="XM_065939924.1"/>
</dbReference>
<dbReference type="SMR" id="Q07DX1"/>
<dbReference type="GeneID" id="136171191"/>
<dbReference type="GO" id="GO:0005901">
    <property type="term" value="C:caveola"/>
    <property type="evidence" value="ECO:0000250"/>
    <property type="project" value="UniProtKB"/>
</dbReference>
<dbReference type="GO" id="GO:0005768">
    <property type="term" value="C:endosome"/>
    <property type="evidence" value="ECO:0000250"/>
    <property type="project" value="UniProtKB"/>
</dbReference>
<dbReference type="GO" id="GO:0005925">
    <property type="term" value="C:focal adhesion"/>
    <property type="evidence" value="ECO:0007669"/>
    <property type="project" value="TreeGrafter"/>
</dbReference>
<dbReference type="GO" id="GO:0000139">
    <property type="term" value="C:Golgi membrane"/>
    <property type="evidence" value="ECO:0007669"/>
    <property type="project" value="UniProtKB-SubCell"/>
</dbReference>
<dbReference type="GO" id="GO:0045121">
    <property type="term" value="C:membrane raft"/>
    <property type="evidence" value="ECO:0000250"/>
    <property type="project" value="UniProtKB"/>
</dbReference>
<dbReference type="GO" id="GO:0048471">
    <property type="term" value="C:perinuclear region of cytoplasm"/>
    <property type="evidence" value="ECO:0007669"/>
    <property type="project" value="TreeGrafter"/>
</dbReference>
<dbReference type="GO" id="GO:0042383">
    <property type="term" value="C:sarcolemma"/>
    <property type="evidence" value="ECO:0007669"/>
    <property type="project" value="TreeGrafter"/>
</dbReference>
<dbReference type="GO" id="GO:0060090">
    <property type="term" value="F:molecular adaptor activity"/>
    <property type="evidence" value="ECO:0007669"/>
    <property type="project" value="TreeGrafter"/>
</dbReference>
<dbReference type="GO" id="GO:0008142">
    <property type="term" value="F:oxysterol binding"/>
    <property type="evidence" value="ECO:0000250"/>
    <property type="project" value="UniProtKB"/>
</dbReference>
<dbReference type="GO" id="GO:0019901">
    <property type="term" value="F:protein kinase binding"/>
    <property type="evidence" value="ECO:0007669"/>
    <property type="project" value="TreeGrafter"/>
</dbReference>
<dbReference type="GO" id="GO:0044325">
    <property type="term" value="F:transmembrane transporter binding"/>
    <property type="evidence" value="ECO:0007669"/>
    <property type="project" value="TreeGrafter"/>
</dbReference>
<dbReference type="GO" id="GO:0070836">
    <property type="term" value="P:caveola assembly"/>
    <property type="evidence" value="ECO:0007669"/>
    <property type="project" value="InterPro"/>
</dbReference>
<dbReference type="GO" id="GO:0030154">
    <property type="term" value="P:cell differentiation"/>
    <property type="evidence" value="ECO:0007669"/>
    <property type="project" value="TreeGrafter"/>
</dbReference>
<dbReference type="GO" id="GO:0001937">
    <property type="term" value="P:negative regulation of endothelial cell proliferation"/>
    <property type="evidence" value="ECO:0007669"/>
    <property type="project" value="TreeGrafter"/>
</dbReference>
<dbReference type="GO" id="GO:0031623">
    <property type="term" value="P:receptor internalization"/>
    <property type="evidence" value="ECO:0000250"/>
    <property type="project" value="UniProtKB"/>
</dbReference>
<dbReference type="GO" id="GO:0051480">
    <property type="term" value="P:regulation of cytosolic calcium ion concentration"/>
    <property type="evidence" value="ECO:0007669"/>
    <property type="project" value="TreeGrafter"/>
</dbReference>
<dbReference type="GO" id="GO:0031295">
    <property type="term" value="P:T cell costimulation"/>
    <property type="evidence" value="ECO:0000250"/>
    <property type="project" value="UniProtKB"/>
</dbReference>
<dbReference type="InterPro" id="IPR001612">
    <property type="entry name" value="Caveolin"/>
</dbReference>
<dbReference type="InterPro" id="IPR018361">
    <property type="entry name" value="Caveolin_CS"/>
</dbReference>
<dbReference type="PANTHER" id="PTHR10844">
    <property type="entry name" value="CAVEOLIN"/>
    <property type="match status" value="1"/>
</dbReference>
<dbReference type="PANTHER" id="PTHR10844:SF18">
    <property type="entry name" value="CAVEOLIN-1"/>
    <property type="match status" value="1"/>
</dbReference>
<dbReference type="Pfam" id="PF01146">
    <property type="entry name" value="Caveolin"/>
    <property type="match status" value="1"/>
</dbReference>
<dbReference type="PROSITE" id="PS01210">
    <property type="entry name" value="CAVEOLIN"/>
    <property type="match status" value="1"/>
</dbReference>
<evidence type="ECO:0000250" key="1"/>
<evidence type="ECO:0000250" key="2">
    <source>
        <dbReference type="UniProtKB" id="P41350"/>
    </source>
</evidence>
<evidence type="ECO:0000250" key="3">
    <source>
        <dbReference type="UniProtKB" id="P49817"/>
    </source>
</evidence>
<evidence type="ECO:0000250" key="4">
    <source>
        <dbReference type="UniProtKB" id="Q03135"/>
    </source>
</evidence>
<evidence type="ECO:0000250" key="5">
    <source>
        <dbReference type="UniProtKB" id="Q2IBA5"/>
    </source>
</evidence>
<evidence type="ECO:0000255" key="6"/>
<evidence type="ECO:0000305" key="7"/>
<proteinExistence type="inferred from homology"/>
<keyword id="KW-0007">Acetylation</keyword>
<keyword id="KW-1003">Cell membrane</keyword>
<keyword id="KW-0333">Golgi apparatus</keyword>
<keyword id="KW-1017">Isopeptide bond</keyword>
<keyword id="KW-0449">Lipoprotein</keyword>
<keyword id="KW-0472">Membrane</keyword>
<keyword id="KW-0564">Palmitate</keyword>
<keyword id="KW-0597">Phosphoprotein</keyword>
<keyword id="KW-0832">Ubl conjugation</keyword>
<organism>
    <name type="scientific">Muntiacus reevesi</name>
    <name type="common">Reeves' muntjac</name>
    <name type="synonym">Cervus reevesi</name>
    <dbReference type="NCBI Taxonomy" id="9886"/>
    <lineage>
        <taxon>Eukaryota</taxon>
        <taxon>Metazoa</taxon>
        <taxon>Chordata</taxon>
        <taxon>Craniata</taxon>
        <taxon>Vertebrata</taxon>
        <taxon>Euteleostomi</taxon>
        <taxon>Mammalia</taxon>
        <taxon>Eutheria</taxon>
        <taxon>Laurasiatheria</taxon>
        <taxon>Artiodactyla</taxon>
        <taxon>Ruminantia</taxon>
        <taxon>Pecora</taxon>
        <taxon>Cervidae</taxon>
        <taxon>Muntiacinae</taxon>
        <taxon>Muntiacus</taxon>
    </lineage>
</organism>
<name>CAV1_MUNRE</name>
<reference key="1">
    <citation type="submission" date="2006-09" db="EMBL/GenBank/DDBJ databases">
        <title>NISC comparative sequencing initiative.</title>
        <authorList>
            <person name="Antonellis A."/>
            <person name="Ayele K."/>
            <person name="Benjamin B."/>
            <person name="Blakesley R.W."/>
            <person name="Boakye A."/>
            <person name="Bouffard G.G."/>
            <person name="Brinkley C."/>
            <person name="Brooks S."/>
            <person name="Chu G."/>
            <person name="Coleman H."/>
            <person name="Engle J."/>
            <person name="Gestole M."/>
            <person name="Greene A."/>
            <person name="Guan X."/>
            <person name="Gupta J."/>
            <person name="Haghighi P."/>
            <person name="Han J."/>
            <person name="Hansen N."/>
            <person name="Ho S.-L."/>
            <person name="Hu P."/>
            <person name="Hunter G."/>
            <person name="Hurle B."/>
            <person name="Idol J.R."/>
            <person name="Kwong P."/>
            <person name="Laric P."/>
            <person name="Larson S."/>
            <person name="Lee-Lin S.-Q."/>
            <person name="Legaspi R."/>
            <person name="Madden M."/>
            <person name="Maduro Q.L."/>
            <person name="Maduro V.B."/>
            <person name="Margulies E.H."/>
            <person name="Masiello C."/>
            <person name="Maskeri B."/>
            <person name="McDowell J."/>
            <person name="Mojidi H.A."/>
            <person name="Mullikin J.C."/>
            <person name="Oestreicher J.S."/>
            <person name="Park M."/>
            <person name="Portnoy M.E."/>
            <person name="Prasad A."/>
            <person name="Puri O."/>
            <person name="Reddix-Dugue N."/>
            <person name="Schandler K."/>
            <person name="Schueler M.G."/>
            <person name="Sison C."/>
            <person name="Stantripop S."/>
            <person name="Stephen E."/>
            <person name="Taye A."/>
            <person name="Thomas J.W."/>
            <person name="Thomas P.J."/>
            <person name="Tsipouri V."/>
            <person name="Ung L."/>
            <person name="Vogt J.L."/>
            <person name="Wetherby K.D."/>
            <person name="Young A."/>
            <person name="Green E.D."/>
        </authorList>
    </citation>
    <scope>NUCLEOTIDE SEQUENCE [LARGE SCALE GENOMIC DNA]</scope>
</reference>
<comment type="function">
    <text evidence="3 4">May act as a scaffolding protein within caveolar membranes. Forms a stable heterooligomeric complex with CAV2 that targets to lipid rafts and drives caveolae formation. Mediates the recruitment of CAVIN proteins (CAVIN1/2/3/4) to the caveolae (By similarity). Interacts directly with G-protein alpha subunits and can functionally regulate their activity (By similarity). Involved in the costimulatory signal essential for T-cell receptor (TCR)-mediated T-cell activation. Its binding to DPP4 induces T-cell proliferation and NF-kappa-B activation in a T-cell receptor/CD3-dependent manner (By similarity). Recruits CTNNB1 to caveolar membranes and may regulate CTNNB1-mediated signaling through the Wnt pathway (By similarity). Negatively regulates TGFB1-mediated activation of SMAD2/3 by mediating the internalization of TGFBR1 from membrane rafts leading to its subsequent degradation (By similarity). Binds 20(S)-hydroxycholesterol (20(S)-OHC) (By similarity).</text>
</comment>
<comment type="subunit">
    <text evidence="2 3 4 5">Homooligomer. Interacts with GLIPR2. Interacts with NOSTRIN (By similarity). Interacts with SNAP25 and STX1A (By similarity). Interacts (via the N-terminus) with DPP4; the interaction is direct (By similarity). Interacts with CTNNB1, CDH1 and JUP. Interacts with PACSIN2; this interaction induces membrane tubulation (By similarity). Interacts with SLC7A9 (By similarity). Interacts with BMX and BTK. Interacts with TGFBR1. Interacts with CAVIN3 (via leucine-zipper domain) in a cholesterol-sensitive manner. Interacts with CAVIN1. Interacts with EHD2 in a cholesterol-dependent manner. Forms a ternary complex with UBXN6 and VCP; mediates CAV1 targeting to lysosomes for degradation. Interacts with ABCG1; this interaction regulates ABCG1-mediated cholesterol efflux (By similarity). Interacts with NEU3; this interaction enhances NEU3 sialidase activity within caveola. Interacts (via C-terminus) with SPRY1, SPRY2 (via C-terminus), SPRY3, and SPRY4 (By similarity). Interacts with IGFBP5; this interaction allows trafficking of IGFBP5 from the plasma membrane to the nucleus (By similarity).</text>
</comment>
<comment type="subcellular location">
    <subcellularLocation>
        <location evidence="1">Golgi apparatus membrane</location>
        <topology evidence="1">Peripheral membrane protein</topology>
    </subcellularLocation>
    <subcellularLocation>
        <location evidence="1">Cell membrane</location>
        <topology evidence="1">Peripheral membrane protein</topology>
    </subcellularLocation>
    <subcellularLocation>
        <location evidence="3">Membrane</location>
        <location evidence="3">Caveola</location>
        <topology evidence="1">Peripheral membrane protein</topology>
    </subcellularLocation>
    <subcellularLocation>
        <location evidence="4">Membrane raft</location>
    </subcellularLocation>
    <text evidence="1">Colocalized with DPP4 in membrane rafts. Potential hairpin-like structure in the membrane. Membrane protein of caveolae (By similarity).</text>
</comment>
<comment type="PTM">
    <text evidence="4">Phosphorylated at Tyr-14 by ABL1 in response to oxidative stress.</text>
</comment>
<comment type="PTM">
    <text evidence="4">Ubiquitinated. Undergo monoubiquitination and multi- and/or polyubiquitination. Monoubiquitination of N-terminal lysines promotes integration in a ternary complex with UBXN6 and VCP which promotes oligomeric CAV1 targeting to lysosomes for degradation. Ubiquitinated by ZNRF1; leading to degradation and modulation of the TLR4-mediated immune response.</text>
</comment>
<comment type="similarity">
    <text evidence="7">Belongs to the caveolin family.</text>
</comment>
<accession>Q07DX1</accession>
<sequence length="178" mass="20611">MSGGKYVDSEGHLYTVPVREQGNIYKPNNKAMAEEMNEKQVYDAHTKEIDLVNRDPKHLNDDVVKIDFEDVIAEPEGTHSFDGIWKASFTTFTVTKYWFYRLLSALFGIPMALIWGIYFAILSFLHIWAVVPCIKSFLIEIQCISRVYSIYVHTFCDPLFEAIGKIFSNIRINMQKEI</sequence>
<gene>
    <name type="primary">CAV1</name>
</gene>
<protein>
    <recommendedName>
        <fullName>Caveolin-1</fullName>
    </recommendedName>
</protein>
<feature type="initiator methionine" description="Removed" evidence="4">
    <location>
        <position position="1"/>
    </location>
</feature>
<feature type="chain" id="PRO_0000260369" description="Caveolin-1">
    <location>
        <begin position="2"/>
        <end position="178"/>
    </location>
</feature>
<feature type="topological domain" description="Cytoplasmic" evidence="6">
    <location>
        <begin position="2"/>
        <end position="104"/>
    </location>
</feature>
<feature type="intramembrane region" description="Helical" evidence="6">
    <location>
        <begin position="105"/>
        <end position="125"/>
    </location>
</feature>
<feature type="topological domain" description="Cytoplasmic" evidence="6">
    <location>
        <begin position="126"/>
        <end position="178"/>
    </location>
</feature>
<feature type="region of interest" description="Required for homooligomerization" evidence="4">
    <location>
        <begin position="2"/>
        <end position="94"/>
    </location>
</feature>
<feature type="region of interest" description="Interaction with CAVIN3" evidence="4">
    <location>
        <begin position="82"/>
        <end position="94"/>
    </location>
</feature>
<feature type="region of interest" description="Interacts with SPRY1, SPRY2, SPRY3 and SPRY4" evidence="3">
    <location>
        <begin position="131"/>
        <end position="142"/>
    </location>
</feature>
<feature type="region of interest" description="Interacts with SPRY1, SPRY2, and SPRY4" evidence="3">
    <location>
        <begin position="149"/>
        <end position="160"/>
    </location>
</feature>
<feature type="region of interest" description="Interacts with SPRY1, SPRY2, SPRY3 and SPRY4" evidence="3">
    <location>
        <begin position="167"/>
        <end position="178"/>
    </location>
</feature>
<feature type="modified residue" description="N-acetylserine" evidence="4">
    <location>
        <position position="2"/>
    </location>
</feature>
<feature type="modified residue" description="Phosphoserine" evidence="2">
    <location>
        <position position="2"/>
    </location>
</feature>
<feature type="modified residue" description="N6-acetyllysine; alternate" evidence="4">
    <location>
        <position position="5"/>
    </location>
</feature>
<feature type="modified residue" description="Phosphotyrosine" evidence="4">
    <location>
        <position position="6"/>
    </location>
</feature>
<feature type="modified residue" description="Phosphoserine" evidence="3">
    <location>
        <position position="9"/>
    </location>
</feature>
<feature type="modified residue" description="Phosphotyrosine; by ABL1" evidence="3">
    <location>
        <position position="14"/>
    </location>
</feature>
<feature type="modified residue" description="Phosphotyrosine" evidence="4">
    <location>
        <position position="25"/>
    </location>
</feature>
<feature type="lipid moiety-binding region" description="S-palmitoyl cysteine" evidence="1">
    <location>
        <position position="133"/>
    </location>
</feature>
<feature type="lipid moiety-binding region" description="S-palmitoyl cysteine" evidence="1">
    <location>
        <position position="143"/>
    </location>
</feature>
<feature type="lipid moiety-binding region" description="S-palmitoyl cysteine" evidence="1">
    <location>
        <position position="156"/>
    </location>
</feature>
<feature type="cross-link" description="Glycyl lysine isopeptide (Lys-Gly) (interchain with G-Cter in ubiquitin); alternate" evidence="4">
    <location>
        <position position="5"/>
    </location>
</feature>
<feature type="cross-link" description="Glycyl lysine isopeptide (Lys-Gly) (interchain with G-Cter in ubiquitin)" evidence="4">
    <location>
        <position position="26"/>
    </location>
</feature>
<feature type="cross-link" description="Glycyl lysine isopeptide (Lys-Gly) (interchain with G-Cter in ubiquitin)" evidence="4">
    <location>
        <position position="30"/>
    </location>
</feature>
<feature type="cross-link" description="Glycyl lysine isopeptide (Lys-Gly) (interchain with G-Cter in ubiquitin)" evidence="4">
    <location>
        <position position="39"/>
    </location>
</feature>
<feature type="cross-link" description="Glycyl lysine isopeptide (Lys-Gly) (interchain with G-Cter in ubiquitin)" evidence="4">
    <location>
        <position position="47"/>
    </location>
</feature>
<feature type="cross-link" description="Glycyl lysine isopeptide (Lys-Gly) (interchain with G-Cter in ubiquitin)" evidence="4">
    <location>
        <position position="57"/>
    </location>
</feature>